<gene>
    <name evidence="4" type="primary">timP</name>
    <name evidence="3" type="synonym">ryfA</name>
    <name evidence="5" type="ordered locus">SL1344_2496.5</name>
</gene>
<name>TIMP_SALTS</name>
<accession>P0DUM2</accession>
<protein>
    <recommendedName>
        <fullName evidence="4">Toxic protein TimP</fullName>
    </recommendedName>
</protein>
<dbReference type="EMBL" id="FQ312003">
    <property type="status" value="NOT_ANNOTATED_CDS"/>
    <property type="molecule type" value="Genomic_DNA"/>
</dbReference>
<dbReference type="Proteomes" id="UP000008962">
    <property type="component" value="Chromosome"/>
</dbReference>
<dbReference type="GO" id="GO:0005886">
    <property type="term" value="C:plasma membrane"/>
    <property type="evidence" value="ECO:0007669"/>
    <property type="project" value="UniProtKB-SubCell"/>
</dbReference>
<dbReference type="NCBIfam" id="NF040796">
    <property type="entry name" value="toxic_TimP"/>
    <property type="match status" value="1"/>
</dbReference>
<feature type="chain" id="PRO_0000453021" description="Toxic protein TimP">
    <location>
        <begin position="1"/>
        <end position="37"/>
    </location>
</feature>
<feature type="transmembrane region" evidence="6">
    <location>
        <begin position="1"/>
        <end position="20"/>
    </location>
</feature>
<sequence>MKVRCFCVVLLVSGTLCLHADRSYPGNSVPVTLNVQSR</sequence>
<comment type="function">
    <text evidence="2">Toxic component of a probable type I toxin-antitoxin (TA) system. Neutralized by sRNA antitoxin TimR which binds to the 5' UTR of timP mRNA and inhibits translation. When TimP is expressed from its promoter in the absence of antitoxin leads to mild cell stress; overexpression in situ is toxic to the cell and causes membrane leakage. The antitoxin gene is encoded immediately upstream and transcribed divergently from the toxin gene; antitoxin RNA is less stable than timP mRNA.</text>
</comment>
<comment type="subcellular location">
    <subcellularLocation>
        <location evidence="2">Cell inner membrane</location>
        <topology evidence="6">Single-pass membrane protein</topology>
    </subcellularLocation>
    <text evidence="6">The signal sequence is not cleaved and anchors the protein in the cell inner membrane.</text>
</comment>
<comment type="induction">
    <text evidence="1">Expressed under many growth conditions, up-regulated in macrophages.</text>
</comment>
<comment type="disruption phenotype">
    <text evidence="2">No changes in biofilm formation, persister cell formation or bacteriophage resistance; no visible phenotype for a double timR-timP deletion. A timR deletion leads to mild envelope stress.</text>
</comment>
<comment type="similarity">
    <text evidence="5">Belongs to the TimP toxin family.</text>
</comment>
<evidence type="ECO:0000269" key="1">
    <source>
    </source>
</evidence>
<evidence type="ECO:0000269" key="2">
    <source>
    </source>
</evidence>
<evidence type="ECO:0000303" key="3">
    <source>
    </source>
</evidence>
<evidence type="ECO:0000303" key="4">
    <source>
    </source>
</evidence>
<evidence type="ECO:0000305" key="5"/>
<evidence type="ECO:0000305" key="6">
    <source>
    </source>
</evidence>
<keyword id="KW-0997">Cell inner membrane</keyword>
<keyword id="KW-1003">Cell membrane</keyword>
<keyword id="KW-0472">Membrane</keyword>
<keyword id="KW-1277">Toxin-antitoxin system</keyword>
<keyword id="KW-0812">Transmembrane</keyword>
<reference key="1">
    <citation type="journal article" date="2012" name="Proc. Natl. Acad. Sci. U.S.A.">
        <title>The transcriptional landscape and small RNAs of Salmonella enterica serovar Typhimurium.</title>
        <authorList>
            <person name="Kroger C."/>
            <person name="Dillon S.C."/>
            <person name="Cameron A.D."/>
            <person name="Papenfort K."/>
            <person name="Sivasankaran S.K."/>
            <person name="Hokamp K."/>
            <person name="Chao Y."/>
            <person name="Sittka A."/>
            <person name="Hebrard M."/>
            <person name="Handler K."/>
            <person name="Colgan A."/>
            <person name="Leekitcharoenphon P."/>
            <person name="Langridge G.C."/>
            <person name="Lohan A.J."/>
            <person name="Loftus B."/>
            <person name="Lucchini S."/>
            <person name="Ussery D.W."/>
            <person name="Dorman C.J."/>
            <person name="Thomson N.R."/>
            <person name="Vogel J."/>
            <person name="Hinton J.C."/>
        </authorList>
    </citation>
    <scope>NUCLEOTIDE SEQUENCE [LARGE SCALE GENOMIC DNA]</scope>
    <source>
        <strain>SL1344</strain>
    </source>
</reference>
<reference key="2">
    <citation type="journal article" date="2013" name="Cell Host Microbe">
        <title>An infection-relevant transcriptomic compendium for Salmonella enterica Serovar Typhimurium.</title>
        <authorList>
            <person name="Kroeger C."/>
            <person name="Colgan A."/>
            <person name="Srikumar S."/>
            <person name="Haendler K."/>
            <person name="Sivasankaran S.K."/>
            <person name="Hammarloef D.L."/>
            <person name="Canals R."/>
            <person name="Grissom J.E."/>
            <person name="Conway T."/>
            <person name="Hokamp K."/>
            <person name="Hinton J.C."/>
        </authorList>
    </citation>
    <scope>INDUCTION</scope>
    <source>
        <strain>4/74</strain>
    </source>
</reference>
<reference key="3">
    <citation type="journal article" date="2020" name="MBio">
        <title>The Small Toxic Salmonella Protein TimP Targets the Cytoplasmic Membrane and Is Repressed by the Small RNA TimR.</title>
        <authorList>
            <person name="Andresen L."/>
            <person name="Martinez-Burgo Y."/>
            <person name="Nilsson Zangelin J."/>
            <person name="Rizvanovic A."/>
            <person name="Holmqvist E."/>
        </authorList>
    </citation>
    <scope>IDENTIFICATION</scope>
    <scope>FUNCTION</scope>
    <scope>SUBCELLULAR LOCATION</scope>
    <scope>INDUCTION</scope>
    <scope>DISRUPTION PHENOTYPE</scope>
    <source>
        <strain>SL1344</strain>
    </source>
</reference>
<organism>
    <name type="scientific">Salmonella typhimurium (strain SL1344)</name>
    <dbReference type="NCBI Taxonomy" id="216597"/>
    <lineage>
        <taxon>Bacteria</taxon>
        <taxon>Pseudomonadati</taxon>
        <taxon>Pseudomonadota</taxon>
        <taxon>Gammaproteobacteria</taxon>
        <taxon>Enterobacterales</taxon>
        <taxon>Enterobacteriaceae</taxon>
        <taxon>Salmonella</taxon>
    </lineage>
</organism>
<proteinExistence type="evidence at transcript level"/>